<protein>
    <recommendedName>
        <fullName>Protein unc-93 homolog A</fullName>
        <shortName>Unc-93A</shortName>
    </recommendedName>
</protein>
<feature type="chain" id="PRO_0000331497" description="Protein unc-93 homolog A">
    <location>
        <begin position="1"/>
        <end position="457"/>
    </location>
</feature>
<feature type="transmembrane region" description="Helical" evidence="2">
    <location>
        <begin position="8"/>
        <end position="28"/>
    </location>
</feature>
<feature type="transmembrane region" description="Helical" evidence="2">
    <location>
        <begin position="42"/>
        <end position="62"/>
    </location>
</feature>
<feature type="transmembrane region" description="Helical" evidence="2">
    <location>
        <begin position="65"/>
        <end position="85"/>
    </location>
</feature>
<feature type="transmembrane region" description="Helical" evidence="2">
    <location>
        <begin position="86"/>
        <end position="106"/>
    </location>
</feature>
<feature type="transmembrane region" description="Helical" evidence="2">
    <location>
        <begin position="140"/>
        <end position="160"/>
    </location>
</feature>
<feature type="transmembrane region" description="Helical" evidence="2">
    <location>
        <begin position="202"/>
        <end position="222"/>
    </location>
</feature>
<feature type="transmembrane region" description="Helical" evidence="2">
    <location>
        <begin position="257"/>
        <end position="277"/>
    </location>
</feature>
<feature type="transmembrane region" description="Helical" evidence="2">
    <location>
        <begin position="291"/>
        <end position="311"/>
    </location>
</feature>
<feature type="transmembrane region" description="Helical" evidence="2">
    <location>
        <begin position="320"/>
        <end position="340"/>
    </location>
</feature>
<feature type="transmembrane region" description="Helical" evidence="2">
    <location>
        <begin position="344"/>
        <end position="364"/>
    </location>
</feature>
<feature type="transmembrane region" description="Helical" evidence="2">
    <location>
        <begin position="395"/>
        <end position="415"/>
    </location>
</feature>
<feature type="region of interest" description="Disordered" evidence="3">
    <location>
        <begin position="438"/>
        <end position="457"/>
    </location>
</feature>
<feature type="glycosylation site" description="N-linked (GlcNAc...) asparagine" evidence="2">
    <location>
        <position position="190"/>
    </location>
</feature>
<reference key="1">
    <citation type="submission" date="2007-02" db="EMBL/GenBank/DDBJ databases">
        <authorList>
            <consortium name="NIH - Mammalian Gene Collection (MGC) project"/>
        </authorList>
    </citation>
    <scope>NUCLEOTIDE SEQUENCE [LARGE SCALE MRNA]</scope>
    <source>
        <strain>Crossbred X Angus</strain>
        <tissue>Ileum</tissue>
    </source>
</reference>
<gene>
    <name type="primary">UNC93A</name>
</gene>
<organism>
    <name type="scientific">Bos taurus</name>
    <name type="common">Bovine</name>
    <dbReference type="NCBI Taxonomy" id="9913"/>
    <lineage>
        <taxon>Eukaryota</taxon>
        <taxon>Metazoa</taxon>
        <taxon>Chordata</taxon>
        <taxon>Craniata</taxon>
        <taxon>Vertebrata</taxon>
        <taxon>Euteleostomi</taxon>
        <taxon>Mammalia</taxon>
        <taxon>Eutheria</taxon>
        <taxon>Laurasiatheria</taxon>
        <taxon>Artiodactyla</taxon>
        <taxon>Ruminantia</taxon>
        <taxon>Pecora</taxon>
        <taxon>Bovidae</taxon>
        <taxon>Bovinae</taxon>
        <taxon>Bos</taxon>
    </lineage>
</organism>
<sequence>MEGNLKNVLVLSFGFLLLFTAYGGLQSLQSSLYSEEGLGVAALSTLYGGMLLSSMFLPPVLIGKLGCKWTLVLAMCCYVAFSLGNFYASWYTLIPASVLVGLGAAALWSAQGTYLTIVGNMQARKTGQVGKDVVSQYFGIFFLIFQSSGVWGNLISSLVFGQMPTQGTIPEEQLQACGASDCLMATLSANSTNRPSQDLIYTLLGIYTGCGFLAVLLMAVFLEPVRDAQPEGEDEKQAPPFWSTLLSTFKLLRDKRLRLLILLPMLSGFEQAFLSGDYTRSYTTCALGIQFVGYVMICFGAADALCSVLFGRLARHTGRTVLFALGAVTQLACIIALLLWKPHPSQLPVFFVFPSLWGMADAVWQTQNNALFGVLFEKNKEAAFANYRLWEALGFVIAFGYSTFLCVSVKLYVLLGVLSAAMAAYGAVEYTESRKADGPLAAGRTKPAEDGATQTKL</sequence>
<name>UN93A_BOVIN</name>
<evidence type="ECO:0000250" key="1"/>
<evidence type="ECO:0000255" key="2"/>
<evidence type="ECO:0000256" key="3">
    <source>
        <dbReference type="SAM" id="MobiDB-lite"/>
    </source>
</evidence>
<evidence type="ECO:0000305" key="4"/>
<proteinExistence type="evidence at transcript level"/>
<keyword id="KW-1003">Cell membrane</keyword>
<keyword id="KW-0325">Glycoprotein</keyword>
<keyword id="KW-0472">Membrane</keyword>
<keyword id="KW-1185">Reference proteome</keyword>
<keyword id="KW-0812">Transmembrane</keyword>
<keyword id="KW-1133">Transmembrane helix</keyword>
<dbReference type="EMBL" id="BC133579">
    <property type="protein sequence ID" value="AAI33580.1"/>
    <property type="molecule type" value="mRNA"/>
</dbReference>
<dbReference type="RefSeq" id="NP_001075926.1">
    <property type="nucleotide sequence ID" value="NM_001082457.1"/>
</dbReference>
<dbReference type="SMR" id="A2VE54"/>
<dbReference type="FunCoup" id="A2VE54">
    <property type="interactions" value="642"/>
</dbReference>
<dbReference type="STRING" id="9913.ENSBTAP00000049617"/>
<dbReference type="GlyCosmos" id="A2VE54">
    <property type="glycosylation" value="1 site, No reported glycans"/>
</dbReference>
<dbReference type="GlyGen" id="A2VE54">
    <property type="glycosylation" value="1 site"/>
</dbReference>
<dbReference type="GeneID" id="613535"/>
<dbReference type="KEGG" id="bta:613535"/>
<dbReference type="CTD" id="54346"/>
<dbReference type="InParanoid" id="A2VE54"/>
<dbReference type="OrthoDB" id="78663at2759"/>
<dbReference type="Proteomes" id="UP000009136">
    <property type="component" value="Unplaced"/>
</dbReference>
<dbReference type="GO" id="GO:0005886">
    <property type="term" value="C:plasma membrane"/>
    <property type="evidence" value="ECO:0007669"/>
    <property type="project" value="UniProtKB-SubCell"/>
</dbReference>
<dbReference type="CDD" id="cd17406">
    <property type="entry name" value="MFS_unc93A_like"/>
    <property type="match status" value="1"/>
</dbReference>
<dbReference type="FunFam" id="1.20.1250.20:FF:000290">
    <property type="entry name" value="Unc-93 homolog A"/>
    <property type="match status" value="1"/>
</dbReference>
<dbReference type="Gene3D" id="1.20.1250.20">
    <property type="entry name" value="MFS general substrate transporter like domains"/>
    <property type="match status" value="2"/>
</dbReference>
<dbReference type="InterPro" id="IPR010291">
    <property type="entry name" value="Ion_channel_UNC-93"/>
</dbReference>
<dbReference type="InterPro" id="IPR036259">
    <property type="entry name" value="MFS_trans_sf"/>
</dbReference>
<dbReference type="InterPro" id="IPR051951">
    <property type="entry name" value="UNC-93_regulatory"/>
</dbReference>
<dbReference type="PANTHER" id="PTHR19444:SF13">
    <property type="entry name" value="PROTEIN UNC-93 HOMOLOG A"/>
    <property type="match status" value="1"/>
</dbReference>
<dbReference type="PANTHER" id="PTHR19444">
    <property type="entry name" value="UNC-93 RELATED"/>
    <property type="match status" value="1"/>
</dbReference>
<dbReference type="Pfam" id="PF05978">
    <property type="entry name" value="UNC-93"/>
    <property type="match status" value="1"/>
</dbReference>
<dbReference type="SUPFAM" id="SSF103473">
    <property type="entry name" value="MFS general substrate transporter"/>
    <property type="match status" value="1"/>
</dbReference>
<comment type="subcellular location">
    <subcellularLocation>
        <location evidence="1">Cell membrane</location>
        <topology evidence="1">Multi-pass membrane protein</topology>
    </subcellularLocation>
</comment>
<comment type="similarity">
    <text evidence="4">Belongs to the unc-93 family.</text>
</comment>
<accession>A2VE54</accession>